<protein>
    <recommendedName>
        <fullName evidence="1">Small ribosomal subunit protein bS6</fullName>
    </recommendedName>
    <alternativeName>
        <fullName evidence="3">30S ribosomal protein S6</fullName>
    </alternativeName>
</protein>
<sequence length="137" mass="15659">MRHYEIVFLVHPDQSEQVPGMIERYTGILTQAGGQIHRLEDWGRRQLAYPIIELHKAHYVLMNVETTAEAVEELETAFRFNDAVLRSMVMRTKAAITEASPMAKAKDERDTRRSSEERAPRAEATEEAEESAENTAE</sequence>
<dbReference type="EMBL" id="CP000851">
    <property type="protein sequence ID" value="ABV88899.1"/>
    <property type="molecule type" value="Genomic_DNA"/>
</dbReference>
<dbReference type="RefSeq" id="WP_012156783.1">
    <property type="nucleotide sequence ID" value="NC_009901.1"/>
</dbReference>
<dbReference type="SMR" id="A8H8L2"/>
<dbReference type="STRING" id="398579.Spea_3586"/>
<dbReference type="KEGG" id="spl:Spea_3586"/>
<dbReference type="eggNOG" id="COG0360">
    <property type="taxonomic scope" value="Bacteria"/>
</dbReference>
<dbReference type="HOGENOM" id="CLU_113441_6_1_6"/>
<dbReference type="OrthoDB" id="9812702at2"/>
<dbReference type="Proteomes" id="UP000002608">
    <property type="component" value="Chromosome"/>
</dbReference>
<dbReference type="GO" id="GO:0022627">
    <property type="term" value="C:cytosolic small ribosomal subunit"/>
    <property type="evidence" value="ECO:0007669"/>
    <property type="project" value="TreeGrafter"/>
</dbReference>
<dbReference type="GO" id="GO:0070181">
    <property type="term" value="F:small ribosomal subunit rRNA binding"/>
    <property type="evidence" value="ECO:0007669"/>
    <property type="project" value="TreeGrafter"/>
</dbReference>
<dbReference type="GO" id="GO:0003735">
    <property type="term" value="F:structural constituent of ribosome"/>
    <property type="evidence" value="ECO:0007669"/>
    <property type="project" value="InterPro"/>
</dbReference>
<dbReference type="GO" id="GO:0006412">
    <property type="term" value="P:translation"/>
    <property type="evidence" value="ECO:0007669"/>
    <property type="project" value="UniProtKB-UniRule"/>
</dbReference>
<dbReference type="CDD" id="cd00473">
    <property type="entry name" value="bS6"/>
    <property type="match status" value="1"/>
</dbReference>
<dbReference type="FunFam" id="3.30.70.60:FF:000003">
    <property type="entry name" value="30S ribosomal protein S6"/>
    <property type="match status" value="1"/>
</dbReference>
<dbReference type="Gene3D" id="3.30.70.60">
    <property type="match status" value="1"/>
</dbReference>
<dbReference type="HAMAP" id="MF_00360">
    <property type="entry name" value="Ribosomal_bS6"/>
    <property type="match status" value="1"/>
</dbReference>
<dbReference type="InterPro" id="IPR000529">
    <property type="entry name" value="Ribosomal_bS6"/>
</dbReference>
<dbReference type="InterPro" id="IPR035980">
    <property type="entry name" value="Ribosomal_bS6_sf"/>
</dbReference>
<dbReference type="InterPro" id="IPR020814">
    <property type="entry name" value="Ribosomal_S6_plastid/chlpt"/>
</dbReference>
<dbReference type="InterPro" id="IPR014717">
    <property type="entry name" value="Transl_elong_EF1B/ribsomal_bS6"/>
</dbReference>
<dbReference type="NCBIfam" id="TIGR00166">
    <property type="entry name" value="S6"/>
    <property type="match status" value="1"/>
</dbReference>
<dbReference type="PANTHER" id="PTHR21011">
    <property type="entry name" value="MITOCHONDRIAL 28S RIBOSOMAL PROTEIN S6"/>
    <property type="match status" value="1"/>
</dbReference>
<dbReference type="PANTHER" id="PTHR21011:SF1">
    <property type="entry name" value="SMALL RIBOSOMAL SUBUNIT PROTEIN BS6M"/>
    <property type="match status" value="1"/>
</dbReference>
<dbReference type="Pfam" id="PF01250">
    <property type="entry name" value="Ribosomal_S6"/>
    <property type="match status" value="1"/>
</dbReference>
<dbReference type="SUPFAM" id="SSF54995">
    <property type="entry name" value="Ribosomal protein S6"/>
    <property type="match status" value="1"/>
</dbReference>
<keyword id="KW-1185">Reference proteome</keyword>
<keyword id="KW-0687">Ribonucleoprotein</keyword>
<keyword id="KW-0689">Ribosomal protein</keyword>
<keyword id="KW-0694">RNA-binding</keyword>
<keyword id="KW-0699">rRNA-binding</keyword>
<comment type="function">
    <text evidence="1">Binds together with bS18 to 16S ribosomal RNA.</text>
</comment>
<comment type="similarity">
    <text evidence="1">Belongs to the bacterial ribosomal protein bS6 family.</text>
</comment>
<organism>
    <name type="scientific">Shewanella pealeana (strain ATCC 700345 / ANG-SQ1)</name>
    <dbReference type="NCBI Taxonomy" id="398579"/>
    <lineage>
        <taxon>Bacteria</taxon>
        <taxon>Pseudomonadati</taxon>
        <taxon>Pseudomonadota</taxon>
        <taxon>Gammaproteobacteria</taxon>
        <taxon>Alteromonadales</taxon>
        <taxon>Shewanellaceae</taxon>
        <taxon>Shewanella</taxon>
    </lineage>
</organism>
<evidence type="ECO:0000255" key="1">
    <source>
        <dbReference type="HAMAP-Rule" id="MF_00360"/>
    </source>
</evidence>
<evidence type="ECO:0000256" key="2">
    <source>
        <dbReference type="SAM" id="MobiDB-lite"/>
    </source>
</evidence>
<evidence type="ECO:0000305" key="3"/>
<name>RS6_SHEPA</name>
<reference key="1">
    <citation type="submission" date="2007-10" db="EMBL/GenBank/DDBJ databases">
        <title>Complete sequence of Shewanella pealeana ATCC 700345.</title>
        <authorList>
            <consortium name="US DOE Joint Genome Institute"/>
            <person name="Copeland A."/>
            <person name="Lucas S."/>
            <person name="Lapidus A."/>
            <person name="Barry K."/>
            <person name="Glavina del Rio T."/>
            <person name="Dalin E."/>
            <person name="Tice H."/>
            <person name="Pitluck S."/>
            <person name="Chertkov O."/>
            <person name="Brettin T."/>
            <person name="Bruce D."/>
            <person name="Detter J.C."/>
            <person name="Han C."/>
            <person name="Schmutz J."/>
            <person name="Larimer F."/>
            <person name="Land M."/>
            <person name="Hauser L."/>
            <person name="Kyrpides N."/>
            <person name="Kim E."/>
            <person name="Zhao J.-S.Z."/>
            <person name="Manno D."/>
            <person name="Hawari J."/>
            <person name="Richardson P."/>
        </authorList>
    </citation>
    <scope>NUCLEOTIDE SEQUENCE [LARGE SCALE GENOMIC DNA]</scope>
    <source>
        <strain>ATCC 700345 / ANG-SQ1</strain>
    </source>
</reference>
<proteinExistence type="inferred from homology"/>
<gene>
    <name evidence="1" type="primary">rpsF</name>
    <name type="ordered locus">Spea_3586</name>
</gene>
<feature type="chain" id="PRO_1000079467" description="Small ribosomal subunit protein bS6">
    <location>
        <begin position="1"/>
        <end position="137"/>
    </location>
</feature>
<feature type="region of interest" description="Disordered" evidence="2">
    <location>
        <begin position="96"/>
        <end position="137"/>
    </location>
</feature>
<feature type="compositionally biased region" description="Basic and acidic residues" evidence="2">
    <location>
        <begin position="104"/>
        <end position="124"/>
    </location>
</feature>
<feature type="compositionally biased region" description="Acidic residues" evidence="2">
    <location>
        <begin position="125"/>
        <end position="137"/>
    </location>
</feature>
<accession>A8H8L2</accession>